<dbReference type="EC" id="6.3.2.-" evidence="1"/>
<dbReference type="EMBL" id="BA000023">
    <property type="protein sequence ID" value="BAB66577.1"/>
    <property type="molecule type" value="Genomic_DNA"/>
</dbReference>
<dbReference type="RefSeq" id="WP_010979555.1">
    <property type="nucleotide sequence ID" value="NC_003106.2"/>
</dbReference>
<dbReference type="PDB" id="3VPB">
    <property type="method" value="X-ray"/>
    <property type="resolution" value="1.80 A"/>
    <property type="chains" value="A/B/C/D=1-282"/>
</dbReference>
<dbReference type="PDB" id="3VPC">
    <property type="method" value="X-ray"/>
    <property type="resolution" value="1.87 A"/>
    <property type="chains" value="A/B/C/D=1-282"/>
</dbReference>
<dbReference type="PDBsum" id="3VPB"/>
<dbReference type="PDBsum" id="3VPC"/>
<dbReference type="SMR" id="Q970U6"/>
<dbReference type="DIP" id="DIP-61747N"/>
<dbReference type="IntAct" id="Q970U6">
    <property type="interactions" value="1"/>
</dbReference>
<dbReference type="STRING" id="273063.STK_15050"/>
<dbReference type="GeneID" id="1459541"/>
<dbReference type="KEGG" id="sto:STK_15050"/>
<dbReference type="PATRIC" id="fig|273063.9.peg.1713"/>
<dbReference type="eggNOG" id="arCOG01589">
    <property type="taxonomic scope" value="Archaea"/>
</dbReference>
<dbReference type="OrthoDB" id="33241at2157"/>
<dbReference type="BRENDA" id="6.3.2.B19">
    <property type="organism ID" value="15396"/>
</dbReference>
<dbReference type="UniPathway" id="UPA00068"/>
<dbReference type="EvolutionaryTrace" id="Q970U6"/>
<dbReference type="Proteomes" id="UP000001015">
    <property type="component" value="Chromosome"/>
</dbReference>
<dbReference type="GO" id="GO:0005737">
    <property type="term" value="C:cytoplasm"/>
    <property type="evidence" value="ECO:0007669"/>
    <property type="project" value="TreeGrafter"/>
</dbReference>
<dbReference type="GO" id="GO:0005524">
    <property type="term" value="F:ATP binding"/>
    <property type="evidence" value="ECO:0007669"/>
    <property type="project" value="UniProtKB-KW"/>
</dbReference>
<dbReference type="GO" id="GO:0043774">
    <property type="term" value="F:coenzyme F420-2 alpha-glutamyl ligase activity"/>
    <property type="evidence" value="ECO:0007669"/>
    <property type="project" value="TreeGrafter"/>
</dbReference>
<dbReference type="GO" id="GO:0042802">
    <property type="term" value="F:identical protein binding"/>
    <property type="evidence" value="ECO:0000353"/>
    <property type="project" value="IntAct"/>
</dbReference>
<dbReference type="GO" id="GO:0046872">
    <property type="term" value="F:metal ion binding"/>
    <property type="evidence" value="ECO:0007669"/>
    <property type="project" value="UniProtKB-KW"/>
</dbReference>
<dbReference type="GO" id="GO:0006526">
    <property type="term" value="P:L-arginine biosynthetic process"/>
    <property type="evidence" value="ECO:0007669"/>
    <property type="project" value="UniProtKB-UniPathway"/>
</dbReference>
<dbReference type="GO" id="GO:0009085">
    <property type="term" value="P:lysine biosynthetic process"/>
    <property type="evidence" value="ECO:0007669"/>
    <property type="project" value="InterPro"/>
</dbReference>
<dbReference type="GO" id="GO:0036211">
    <property type="term" value="P:protein modification process"/>
    <property type="evidence" value="ECO:0007669"/>
    <property type="project" value="InterPro"/>
</dbReference>
<dbReference type="FunFam" id="3.30.1490.20:FF:000025">
    <property type="entry name" value="Alpha-aminoadipate--LysW ligase LysX protein"/>
    <property type="match status" value="1"/>
</dbReference>
<dbReference type="FunFam" id="3.30.470.20:FF:000058">
    <property type="entry name" value="Alpha-aminoadipate--LysW ligase LysX protein"/>
    <property type="match status" value="1"/>
</dbReference>
<dbReference type="FunFam" id="3.40.50.20:FF:000055">
    <property type="entry name" value="Glutamate--LysW ligase ArgX"/>
    <property type="match status" value="1"/>
</dbReference>
<dbReference type="Gene3D" id="3.40.50.20">
    <property type="match status" value="1"/>
</dbReference>
<dbReference type="Gene3D" id="3.30.1490.20">
    <property type="entry name" value="ATP-grasp fold, A domain"/>
    <property type="match status" value="1"/>
</dbReference>
<dbReference type="Gene3D" id="3.30.470.20">
    <property type="entry name" value="ATP-grasp fold, B domain"/>
    <property type="match status" value="1"/>
</dbReference>
<dbReference type="InterPro" id="IPR011761">
    <property type="entry name" value="ATP-grasp"/>
</dbReference>
<dbReference type="InterPro" id="IPR013651">
    <property type="entry name" value="ATP-grasp_RimK-type"/>
</dbReference>
<dbReference type="InterPro" id="IPR013815">
    <property type="entry name" value="ATP_grasp_subdomain_1"/>
</dbReference>
<dbReference type="InterPro" id="IPR054562">
    <property type="entry name" value="LysX/ArgX_preATP_grasp"/>
</dbReference>
<dbReference type="InterPro" id="IPR011870">
    <property type="entry name" value="LysX_arch"/>
</dbReference>
<dbReference type="InterPro" id="IPR016185">
    <property type="entry name" value="PreATP-grasp_dom_sf"/>
</dbReference>
<dbReference type="InterPro" id="IPR004666">
    <property type="entry name" value="Rp_bS6_RimK/Lys_biosynth_LsyX"/>
</dbReference>
<dbReference type="NCBIfam" id="TIGR02144">
    <property type="entry name" value="LysX_arch"/>
    <property type="match status" value="1"/>
</dbReference>
<dbReference type="NCBIfam" id="TIGR00768">
    <property type="entry name" value="rimK_fam"/>
    <property type="match status" value="1"/>
</dbReference>
<dbReference type="PANTHER" id="PTHR21621:SF2">
    <property type="entry name" value="COENZYME GAMMA-F420-2:ALPHA-L-GLUTAMATE LIGASE"/>
    <property type="match status" value="1"/>
</dbReference>
<dbReference type="PANTHER" id="PTHR21621">
    <property type="entry name" value="RIBOSOMAL PROTEIN S6 MODIFICATION PROTEIN"/>
    <property type="match status" value="1"/>
</dbReference>
<dbReference type="Pfam" id="PF22626">
    <property type="entry name" value="LysX_preATP_grasp"/>
    <property type="match status" value="1"/>
</dbReference>
<dbReference type="Pfam" id="PF08443">
    <property type="entry name" value="RimK"/>
    <property type="match status" value="1"/>
</dbReference>
<dbReference type="SUPFAM" id="SSF56059">
    <property type="entry name" value="Glutathione synthetase ATP-binding domain-like"/>
    <property type="match status" value="1"/>
</dbReference>
<dbReference type="SUPFAM" id="SSF52440">
    <property type="entry name" value="PreATP-grasp domain"/>
    <property type="match status" value="1"/>
</dbReference>
<dbReference type="PROSITE" id="PS50975">
    <property type="entry name" value="ATP_GRASP"/>
    <property type="match status" value="1"/>
</dbReference>
<keyword id="KW-0002">3D-structure</keyword>
<keyword id="KW-0028">Amino-acid biosynthesis</keyword>
<keyword id="KW-0055">Arginine biosynthesis</keyword>
<keyword id="KW-0067">ATP-binding</keyword>
<keyword id="KW-0436">Ligase</keyword>
<keyword id="KW-0460">Magnesium</keyword>
<keyword id="KW-0479">Metal-binding</keyword>
<keyword id="KW-0547">Nucleotide-binding</keyword>
<keyword id="KW-1185">Reference proteome</keyword>
<reference key="1">
    <citation type="journal article" date="2001" name="DNA Res.">
        <title>Complete genome sequence of an aerobic thermoacidophilic Crenarchaeon, Sulfolobus tokodaii strain7.</title>
        <authorList>
            <person name="Kawarabayasi Y."/>
            <person name="Hino Y."/>
            <person name="Horikawa H."/>
            <person name="Jin-no K."/>
            <person name="Takahashi M."/>
            <person name="Sekine M."/>
            <person name="Baba S."/>
            <person name="Ankai A."/>
            <person name="Kosugi H."/>
            <person name="Hosoyama A."/>
            <person name="Fukui S."/>
            <person name="Nagai Y."/>
            <person name="Nishijima K."/>
            <person name="Otsuka R."/>
            <person name="Nakazawa H."/>
            <person name="Takamiya M."/>
            <person name="Kato Y."/>
            <person name="Yoshizawa T."/>
            <person name="Tanaka T."/>
            <person name="Kudoh Y."/>
            <person name="Yamazaki J."/>
            <person name="Kushida N."/>
            <person name="Oguchi A."/>
            <person name="Aoki K."/>
            <person name="Masuda S."/>
            <person name="Yanagii M."/>
            <person name="Nishimura M."/>
            <person name="Yamagishi A."/>
            <person name="Oshima T."/>
            <person name="Kikuchi H."/>
        </authorList>
    </citation>
    <scope>NUCLEOTIDE SEQUENCE [LARGE SCALE GENOMIC DNA]</scope>
    <source>
        <strain>DSM 16993 / JCM 10545 / NBRC 100140 / 7</strain>
    </source>
</reference>
<reference key="2">
    <citation type="journal article" date="2013" name="Nat. Chem. Biol.">
        <title>Lysine and arginine biosyntheses mediated by a common carrier protein in Sulfolobus.</title>
        <authorList>
            <person name="Ouchi T."/>
            <person name="Tomita T."/>
            <person name="Horie A."/>
            <person name="Yoshida A."/>
            <person name="Takahashi K."/>
            <person name="Nishida H."/>
            <person name="Lassak K."/>
            <person name="Taka H."/>
            <person name="Mineki R."/>
            <person name="Fujimura T."/>
            <person name="Kosono S."/>
            <person name="Nishiyama C."/>
            <person name="Masui R."/>
            <person name="Kuramitsu S."/>
            <person name="Albers S.V."/>
            <person name="Kuzuyama T."/>
            <person name="Nishiyama M."/>
        </authorList>
    </citation>
    <scope>X-RAY CRYSTALLOGRAPHY (1.8 ANGSTROMS) IN COMPLEX WITH LYSW; ADP AND MAGNESIUM</scope>
    <scope>SUBUNIT</scope>
    <scope>IDENTIFICATION BY MASS SPECTROMETRY</scope>
    <scope>INTERACTION WITH LYSW</scope>
    <source>
        <strain>DSM 16993 / JCM 10545 / NBRC 100140 / 7</strain>
    </source>
</reference>
<gene>
    <name evidence="4" type="primary">argX</name>
    <name type="synonym">argE</name>
    <name type="ordered locus">STK_15050</name>
</gene>
<name>ARGX_SULTO</name>
<proteinExistence type="evidence at protein level"/>
<protein>
    <recommendedName>
        <fullName evidence="5">Glutamate--LysW ligase ArgX</fullName>
        <ecNumber evidence="1">6.3.2.-</ecNumber>
    </recommendedName>
</protein>
<accession>Q970U6</accession>
<sequence length="282" mass="31534">MRVVLIVDIVRQEEKLIAKALEENKVQYDIINVAQEPLPFNKALGRYDVAIIRPVSMYRALYSSAVLEAAGVHTINSSDVINVCGDKILTYSKLYREGIPIPDSIIALSAEAALKAYEQRGFPLIDKPPIGSWGRLVSLIRDVFEGKTIIEHRELMGNSALKAHIVQEYIQYKGRDIRCIAIGEELLGCYARNIPPNEWRANVALGGTPSNIEVDEKLKETVVKAVSIVHGEFVSIDILEHPNKGYVVNELNDVPEFKGFMVATNINVAQKLVEYIKENYSK</sequence>
<organism>
    <name type="scientific">Sulfurisphaera tokodaii (strain DSM 16993 / JCM 10545 / NBRC 100140 / 7)</name>
    <name type="common">Sulfolobus tokodaii</name>
    <dbReference type="NCBI Taxonomy" id="273063"/>
    <lineage>
        <taxon>Archaea</taxon>
        <taxon>Thermoproteota</taxon>
        <taxon>Thermoprotei</taxon>
        <taxon>Sulfolobales</taxon>
        <taxon>Sulfolobaceae</taxon>
        <taxon>Sulfurisphaera</taxon>
    </lineage>
</organism>
<evidence type="ECO:0000250" key="1">
    <source>
        <dbReference type="UniProtKB" id="Q4J8E7"/>
    </source>
</evidence>
<evidence type="ECO:0000255" key="2">
    <source>
        <dbReference type="PROSITE-ProRule" id="PRU00409"/>
    </source>
</evidence>
<evidence type="ECO:0000269" key="3">
    <source>
    </source>
</evidence>
<evidence type="ECO:0000303" key="4">
    <source>
    </source>
</evidence>
<evidence type="ECO:0000305" key="5"/>
<evidence type="ECO:0000305" key="6">
    <source>
    </source>
</evidence>
<evidence type="ECO:0007829" key="7">
    <source>
        <dbReference type="PDB" id="3VPB"/>
    </source>
</evidence>
<comment type="function">
    <text evidence="1">Catalyzes the ATP-dependent formation of a covalent bond between the amino group of glutamate and the gamma-carboxyl group of the C-terminal glutamate residue in LysW.</text>
</comment>
<comment type="catalytic activity">
    <reaction evidence="1">
        <text>[amino-group carrier protein]-C-terminal-L-glutamate + L-glutamate + ATP = [amino-group carrier protein]-C-terminal-gamma-(L-glutamyl)-L-glutamate + ADP + phosphate + H(+)</text>
        <dbReference type="Rhea" id="RHEA:52624"/>
        <dbReference type="Rhea" id="RHEA-COMP:9693"/>
        <dbReference type="Rhea" id="RHEA-COMP:13311"/>
        <dbReference type="ChEBI" id="CHEBI:15378"/>
        <dbReference type="ChEBI" id="CHEBI:29985"/>
        <dbReference type="ChEBI" id="CHEBI:30616"/>
        <dbReference type="ChEBI" id="CHEBI:43474"/>
        <dbReference type="ChEBI" id="CHEBI:78525"/>
        <dbReference type="ChEBI" id="CHEBI:136714"/>
        <dbReference type="ChEBI" id="CHEBI:456216"/>
    </reaction>
</comment>
<comment type="cofactor">
    <cofactor evidence="3">
        <name>Mg(2+)</name>
        <dbReference type="ChEBI" id="CHEBI:18420"/>
    </cofactor>
    <text evidence="3">Binds 2 magnesium ions per subunit.</text>
</comment>
<comment type="pathway">
    <text evidence="1">Amino-acid biosynthesis; L-arginine biosynthesis.</text>
</comment>
<comment type="subunit">
    <text evidence="3">Homotetramer. Interacts with LysW.</text>
</comment>
<comment type="interaction">
    <interactant intactId="EBI-16037902">
        <id>Q970U6</id>
    </interactant>
    <interactant intactId="EBI-16037902">
        <id>Q970U6</id>
        <label>argX</label>
    </interactant>
    <organismsDiffer>false</organismsDiffer>
    <experiments>3</experiments>
</comment>
<comment type="similarity">
    <text evidence="5">Belongs to the RimK family. LysX subfamily.</text>
</comment>
<feature type="chain" id="PRO_0000422990" description="Glutamate--LysW ligase ArgX">
    <location>
        <begin position="1"/>
        <end position="282"/>
    </location>
</feature>
<feature type="domain" description="ATP-grasp" evidence="2">
    <location>
        <begin position="91"/>
        <end position="277"/>
    </location>
</feature>
<feature type="short sequence motif" description="GF motif that is essential for ArgX substrate specificity" evidence="6">
    <location>
        <begin position="259"/>
        <end position="260"/>
    </location>
</feature>
<feature type="binding site" evidence="6">
    <location>
        <position position="87"/>
    </location>
    <ligand>
        <name>ATP</name>
        <dbReference type="ChEBI" id="CHEBI:30616"/>
    </ligand>
</feature>
<feature type="binding site" evidence="6">
    <location>
        <position position="127"/>
    </location>
    <ligand>
        <name>ATP</name>
        <dbReference type="ChEBI" id="CHEBI:30616"/>
    </ligand>
</feature>
<feature type="binding site" evidence="6">
    <location>
        <begin position="131"/>
        <end position="137"/>
    </location>
    <ligand>
        <name>ATP</name>
        <dbReference type="ChEBI" id="CHEBI:30616"/>
    </ligand>
</feature>
<feature type="binding site" evidence="6">
    <location>
        <begin position="167"/>
        <end position="178"/>
    </location>
    <ligand>
        <name>ATP</name>
        <dbReference type="ChEBI" id="CHEBI:30616"/>
    </ligand>
</feature>
<feature type="binding site" evidence="6">
    <location>
        <position position="192"/>
    </location>
    <ligand>
        <name>substrate</name>
    </ligand>
</feature>
<feature type="binding site" evidence="6">
    <location>
        <position position="202"/>
    </location>
    <ligand>
        <name>ATP</name>
        <dbReference type="ChEBI" id="CHEBI:30616"/>
    </ligand>
</feature>
<feature type="binding site" evidence="6">
    <location>
        <begin position="203"/>
        <end position="204"/>
    </location>
    <ligand>
        <name>substrate</name>
    </ligand>
</feature>
<feature type="binding site" evidence="3">
    <location>
        <position position="237"/>
    </location>
    <ligand>
        <name>Mg(2+)</name>
        <dbReference type="ChEBI" id="CHEBI:18420"/>
        <label>1</label>
    </ligand>
</feature>
<feature type="binding site" evidence="3">
    <location>
        <position position="250"/>
    </location>
    <ligand>
        <name>Mg(2+)</name>
        <dbReference type="ChEBI" id="CHEBI:18420"/>
        <label>1</label>
    </ligand>
</feature>
<feature type="binding site" evidence="3">
    <location>
        <position position="250"/>
    </location>
    <ligand>
        <name>Mg(2+)</name>
        <dbReference type="ChEBI" id="CHEBI:18420"/>
        <label>2</label>
    </ligand>
</feature>
<feature type="binding site" evidence="3">
    <location>
        <position position="252"/>
    </location>
    <ligand>
        <name>Mg(2+)</name>
        <dbReference type="ChEBI" id="CHEBI:18420"/>
        <label>2</label>
    </ligand>
</feature>
<feature type="binding site" evidence="6">
    <location>
        <begin position="256"/>
        <end position="260"/>
    </location>
    <ligand>
        <name>substrate</name>
    </ligand>
</feature>
<feature type="strand" evidence="7">
    <location>
        <begin position="2"/>
        <end position="9"/>
    </location>
</feature>
<feature type="helix" evidence="7">
    <location>
        <begin position="12"/>
        <end position="23"/>
    </location>
</feature>
<feature type="strand" evidence="7">
    <location>
        <begin position="27"/>
        <end position="32"/>
    </location>
</feature>
<feature type="turn" evidence="7">
    <location>
        <begin position="33"/>
        <end position="35"/>
    </location>
</feature>
<feature type="strand" evidence="7">
    <location>
        <begin position="38"/>
        <end position="41"/>
    </location>
</feature>
<feature type="helix" evidence="7">
    <location>
        <begin position="42"/>
        <end position="46"/>
    </location>
</feature>
<feature type="strand" evidence="7">
    <location>
        <begin position="48"/>
        <end position="52"/>
    </location>
</feature>
<feature type="helix" evidence="7">
    <location>
        <begin position="57"/>
        <end position="69"/>
    </location>
</feature>
<feature type="strand" evidence="7">
    <location>
        <begin position="73"/>
        <end position="76"/>
    </location>
</feature>
<feature type="helix" evidence="7">
    <location>
        <begin position="78"/>
        <end position="84"/>
    </location>
</feature>
<feature type="helix" evidence="7">
    <location>
        <begin position="87"/>
        <end position="96"/>
    </location>
</feature>
<feature type="strand" evidence="7">
    <location>
        <begin position="104"/>
        <end position="107"/>
    </location>
</feature>
<feature type="helix" evidence="7">
    <location>
        <begin position="110"/>
        <end position="120"/>
    </location>
</feature>
<feature type="strand" evidence="7">
    <location>
        <begin position="122"/>
        <end position="127"/>
    </location>
</feature>
<feature type="turn" evidence="7">
    <location>
        <begin position="133"/>
        <end position="136"/>
    </location>
</feature>
<feature type="strand" evidence="7">
    <location>
        <begin position="138"/>
        <end position="140"/>
    </location>
</feature>
<feature type="helix" evidence="7">
    <location>
        <begin position="143"/>
        <end position="153"/>
    </location>
</feature>
<feature type="helix" evidence="7">
    <location>
        <begin position="159"/>
        <end position="162"/>
    </location>
</feature>
<feature type="strand" evidence="7">
    <location>
        <begin position="164"/>
        <end position="168"/>
    </location>
</feature>
<feature type="strand" evidence="7">
    <location>
        <begin position="172"/>
        <end position="182"/>
    </location>
</feature>
<feature type="strand" evidence="7">
    <location>
        <begin position="185"/>
        <end position="193"/>
    </location>
</feature>
<feature type="helix" evidence="7">
    <location>
        <begin position="203"/>
        <end position="205"/>
    </location>
</feature>
<feature type="strand" evidence="7">
    <location>
        <begin position="208"/>
        <end position="210"/>
    </location>
</feature>
<feature type="helix" evidence="7">
    <location>
        <begin position="216"/>
        <end position="229"/>
    </location>
</feature>
<feature type="strand" evidence="7">
    <location>
        <begin position="232"/>
        <end position="241"/>
    </location>
</feature>
<feature type="turn" evidence="7">
    <location>
        <begin position="242"/>
        <end position="244"/>
    </location>
</feature>
<feature type="strand" evidence="7">
    <location>
        <begin position="245"/>
        <end position="254"/>
    </location>
</feature>
<feature type="helix" evidence="7">
    <location>
        <begin position="258"/>
        <end position="264"/>
    </location>
</feature>
<feature type="helix" evidence="7">
    <location>
        <begin position="268"/>
        <end position="280"/>
    </location>
</feature>